<accession>Q07KM7</accession>
<comment type="function">
    <text evidence="1">One of the primary rRNA binding proteins, it binds specifically to the 5'-end of 16S ribosomal RNA.</text>
</comment>
<comment type="subunit">
    <text evidence="1">Part of the 30S ribosomal subunit.</text>
</comment>
<comment type="similarity">
    <text evidence="1">Belongs to the universal ribosomal protein uS17 family.</text>
</comment>
<reference key="1">
    <citation type="submission" date="2006-09" db="EMBL/GenBank/DDBJ databases">
        <title>Complete sequence of Rhodopseudomonas palustris BisA53.</title>
        <authorList>
            <consortium name="US DOE Joint Genome Institute"/>
            <person name="Copeland A."/>
            <person name="Lucas S."/>
            <person name="Lapidus A."/>
            <person name="Barry K."/>
            <person name="Detter J.C."/>
            <person name="Glavina del Rio T."/>
            <person name="Hammon N."/>
            <person name="Israni S."/>
            <person name="Dalin E."/>
            <person name="Tice H."/>
            <person name="Pitluck S."/>
            <person name="Chain P."/>
            <person name="Malfatti S."/>
            <person name="Shin M."/>
            <person name="Vergez L."/>
            <person name="Schmutz J."/>
            <person name="Larimer F."/>
            <person name="Land M."/>
            <person name="Hauser L."/>
            <person name="Pelletier D.A."/>
            <person name="Kyrpides N."/>
            <person name="Kim E."/>
            <person name="Harwood C.S."/>
            <person name="Oda Y."/>
            <person name="Richardson P."/>
        </authorList>
    </citation>
    <scope>NUCLEOTIDE SEQUENCE [LARGE SCALE GENOMIC DNA]</scope>
    <source>
        <strain>BisA53</strain>
    </source>
</reference>
<dbReference type="EMBL" id="CP000463">
    <property type="protein sequence ID" value="ABJ07507.1"/>
    <property type="molecule type" value="Genomic_DNA"/>
</dbReference>
<dbReference type="SMR" id="Q07KM7"/>
<dbReference type="STRING" id="316055.RPE_3577"/>
<dbReference type="KEGG" id="rpe:RPE_3577"/>
<dbReference type="eggNOG" id="COG0186">
    <property type="taxonomic scope" value="Bacteria"/>
</dbReference>
<dbReference type="HOGENOM" id="CLU_073626_1_1_5"/>
<dbReference type="OrthoDB" id="9811714at2"/>
<dbReference type="GO" id="GO:0022627">
    <property type="term" value="C:cytosolic small ribosomal subunit"/>
    <property type="evidence" value="ECO:0007669"/>
    <property type="project" value="TreeGrafter"/>
</dbReference>
<dbReference type="GO" id="GO:0019843">
    <property type="term" value="F:rRNA binding"/>
    <property type="evidence" value="ECO:0007669"/>
    <property type="project" value="UniProtKB-UniRule"/>
</dbReference>
<dbReference type="GO" id="GO:0003735">
    <property type="term" value="F:structural constituent of ribosome"/>
    <property type="evidence" value="ECO:0007669"/>
    <property type="project" value="InterPro"/>
</dbReference>
<dbReference type="GO" id="GO:0006412">
    <property type="term" value="P:translation"/>
    <property type="evidence" value="ECO:0007669"/>
    <property type="project" value="UniProtKB-UniRule"/>
</dbReference>
<dbReference type="CDD" id="cd00364">
    <property type="entry name" value="Ribosomal_uS17"/>
    <property type="match status" value="1"/>
</dbReference>
<dbReference type="FunFam" id="2.40.50.140:FF:000204">
    <property type="entry name" value="30S ribosomal protein S17"/>
    <property type="match status" value="1"/>
</dbReference>
<dbReference type="Gene3D" id="2.40.50.140">
    <property type="entry name" value="Nucleic acid-binding proteins"/>
    <property type="match status" value="1"/>
</dbReference>
<dbReference type="HAMAP" id="MF_01345_B">
    <property type="entry name" value="Ribosomal_uS17_B"/>
    <property type="match status" value="1"/>
</dbReference>
<dbReference type="InterPro" id="IPR012340">
    <property type="entry name" value="NA-bd_OB-fold"/>
</dbReference>
<dbReference type="InterPro" id="IPR000266">
    <property type="entry name" value="Ribosomal_uS17"/>
</dbReference>
<dbReference type="InterPro" id="IPR019984">
    <property type="entry name" value="Ribosomal_uS17_bact/chlr"/>
</dbReference>
<dbReference type="InterPro" id="IPR019979">
    <property type="entry name" value="Ribosomal_uS17_CS"/>
</dbReference>
<dbReference type="NCBIfam" id="NF004123">
    <property type="entry name" value="PRK05610.1"/>
    <property type="match status" value="1"/>
</dbReference>
<dbReference type="NCBIfam" id="TIGR03635">
    <property type="entry name" value="uS17_bact"/>
    <property type="match status" value="1"/>
</dbReference>
<dbReference type="PANTHER" id="PTHR10744">
    <property type="entry name" value="40S RIBOSOMAL PROTEIN S11 FAMILY MEMBER"/>
    <property type="match status" value="1"/>
</dbReference>
<dbReference type="PANTHER" id="PTHR10744:SF1">
    <property type="entry name" value="SMALL RIBOSOMAL SUBUNIT PROTEIN US17M"/>
    <property type="match status" value="1"/>
</dbReference>
<dbReference type="Pfam" id="PF00366">
    <property type="entry name" value="Ribosomal_S17"/>
    <property type="match status" value="1"/>
</dbReference>
<dbReference type="PRINTS" id="PR00973">
    <property type="entry name" value="RIBOSOMALS17"/>
</dbReference>
<dbReference type="SUPFAM" id="SSF50249">
    <property type="entry name" value="Nucleic acid-binding proteins"/>
    <property type="match status" value="1"/>
</dbReference>
<dbReference type="PROSITE" id="PS00056">
    <property type="entry name" value="RIBOSOMAL_S17"/>
    <property type="match status" value="1"/>
</dbReference>
<proteinExistence type="inferred from homology"/>
<gene>
    <name evidence="1" type="primary">rpsQ</name>
    <name type="ordered locus">RPE_3577</name>
</gene>
<name>RS17_RHOP5</name>
<evidence type="ECO:0000255" key="1">
    <source>
        <dbReference type="HAMAP-Rule" id="MF_01345"/>
    </source>
</evidence>
<evidence type="ECO:0000305" key="2"/>
<keyword id="KW-0687">Ribonucleoprotein</keyword>
<keyword id="KW-0689">Ribosomal protein</keyword>
<keyword id="KW-0694">RNA-binding</keyword>
<keyword id="KW-0699">rRNA-binding</keyword>
<protein>
    <recommendedName>
        <fullName evidence="1">Small ribosomal subunit protein uS17</fullName>
    </recommendedName>
    <alternativeName>
        <fullName evidence="2">30S ribosomal protein S17</fullName>
    </alternativeName>
</protein>
<feature type="chain" id="PRO_1000055005" description="Small ribosomal subunit protein uS17">
    <location>
        <begin position="1"/>
        <end position="82"/>
    </location>
</feature>
<organism>
    <name type="scientific">Rhodopseudomonas palustris (strain BisA53)</name>
    <dbReference type="NCBI Taxonomy" id="316055"/>
    <lineage>
        <taxon>Bacteria</taxon>
        <taxon>Pseudomonadati</taxon>
        <taxon>Pseudomonadota</taxon>
        <taxon>Alphaproteobacteria</taxon>
        <taxon>Hyphomicrobiales</taxon>
        <taxon>Nitrobacteraceae</taxon>
        <taxon>Rhodopseudomonas</taxon>
    </lineage>
</organism>
<sequence>MPKRTLQGVVVSDKQAKTVVVRVDRRFTHPIYKKTIRRSKNYHAHDENNEFKPGDVVWIEESKPISKLKRWTVVRGEQKKTA</sequence>